<organism>
    <name type="scientific">Ralstonia nicotianae (strain ATCC BAA-1114 / GMI1000)</name>
    <name type="common">Ralstonia solanacearum</name>
    <dbReference type="NCBI Taxonomy" id="267608"/>
    <lineage>
        <taxon>Bacteria</taxon>
        <taxon>Pseudomonadati</taxon>
        <taxon>Pseudomonadota</taxon>
        <taxon>Betaproteobacteria</taxon>
        <taxon>Burkholderiales</taxon>
        <taxon>Burkholderiaceae</taxon>
        <taxon>Ralstonia</taxon>
        <taxon>Ralstonia solanacearum species complex</taxon>
    </lineage>
</organism>
<protein>
    <recommendedName>
        <fullName>Polygalacturonase</fullName>
        <shortName>PGA</shortName>
        <ecNumber>3.2.1.15</ecNumber>
    </recommendedName>
    <alternativeName>
        <fullName>Pectinase</fullName>
    </alternativeName>
</protein>
<geneLocation type="plasmid">
    <name>megaplasmid Rsp</name>
</geneLocation>
<reference key="1">
    <citation type="journal article" date="2002" name="Nature">
        <title>Genome sequence of the plant pathogen Ralstonia solanacearum.</title>
        <authorList>
            <person name="Salanoubat M."/>
            <person name="Genin S."/>
            <person name="Artiguenave F."/>
            <person name="Gouzy J."/>
            <person name="Mangenot S."/>
            <person name="Arlat M."/>
            <person name="Billault A."/>
            <person name="Brottier P."/>
            <person name="Camus J.-C."/>
            <person name="Cattolico L."/>
            <person name="Chandler M."/>
            <person name="Choisne N."/>
            <person name="Claudel-Renard C."/>
            <person name="Cunnac S."/>
            <person name="Demange N."/>
            <person name="Gaspin C."/>
            <person name="Lavie M."/>
            <person name="Moisan A."/>
            <person name="Robert C."/>
            <person name="Saurin W."/>
            <person name="Schiex T."/>
            <person name="Siguier P."/>
            <person name="Thebault P."/>
            <person name="Whalen M."/>
            <person name="Wincker P."/>
            <person name="Levy M."/>
            <person name="Weissenbach J."/>
            <person name="Boucher C.A."/>
        </authorList>
    </citation>
    <scope>NUCLEOTIDE SEQUENCE [LARGE SCALE GENOMIC DNA]</scope>
    <source>
        <strain>ATCC BAA-1114 / GMI1000</strain>
    </source>
</reference>
<gene>
    <name type="primary">pglA</name>
    <name type="ordered locus">RSp0880</name>
    <name type="ORF">RS01651</name>
</gene>
<name>PGLR_RALN1</name>
<dbReference type="EC" id="3.2.1.15"/>
<dbReference type="EMBL" id="AL646053">
    <property type="protein sequence ID" value="CAD18031.1"/>
    <property type="molecule type" value="Genomic_DNA"/>
</dbReference>
<dbReference type="RefSeq" id="WP_011004177.1">
    <property type="nucleotide sequence ID" value="NC_003296.1"/>
</dbReference>
<dbReference type="SMR" id="P58598"/>
<dbReference type="STRING" id="267608.RSp0880"/>
<dbReference type="CAZy" id="GH28">
    <property type="family name" value="Glycoside Hydrolase Family 28"/>
</dbReference>
<dbReference type="EnsemblBacteria" id="CAD18031">
    <property type="protein sequence ID" value="CAD18031"/>
    <property type="gene ID" value="RSp0880"/>
</dbReference>
<dbReference type="KEGG" id="rso:RSp0880"/>
<dbReference type="PATRIC" id="fig|267608.8.peg.4350"/>
<dbReference type="eggNOG" id="COG5434">
    <property type="taxonomic scope" value="Bacteria"/>
</dbReference>
<dbReference type="HOGENOM" id="CLU_016031_0_0_4"/>
<dbReference type="Proteomes" id="UP000001436">
    <property type="component" value="Plasmid megaplasmid Rsp"/>
</dbReference>
<dbReference type="GO" id="GO:0005576">
    <property type="term" value="C:extracellular region"/>
    <property type="evidence" value="ECO:0007669"/>
    <property type="project" value="UniProtKB-SubCell"/>
</dbReference>
<dbReference type="GO" id="GO:0004650">
    <property type="term" value="F:polygalacturonase activity"/>
    <property type="evidence" value="ECO:0007669"/>
    <property type="project" value="UniProtKB-EC"/>
</dbReference>
<dbReference type="GO" id="GO:0005975">
    <property type="term" value="P:carbohydrate metabolic process"/>
    <property type="evidence" value="ECO:0007669"/>
    <property type="project" value="InterPro"/>
</dbReference>
<dbReference type="GO" id="GO:0071555">
    <property type="term" value="P:cell wall organization"/>
    <property type="evidence" value="ECO:0007669"/>
    <property type="project" value="UniProtKB-KW"/>
</dbReference>
<dbReference type="Gene3D" id="2.160.20.10">
    <property type="entry name" value="Single-stranded right-handed beta-helix, Pectin lyase-like"/>
    <property type="match status" value="1"/>
</dbReference>
<dbReference type="InterPro" id="IPR051801">
    <property type="entry name" value="GH28_Enzymes"/>
</dbReference>
<dbReference type="InterPro" id="IPR000743">
    <property type="entry name" value="Glyco_hydro_28"/>
</dbReference>
<dbReference type="InterPro" id="IPR012334">
    <property type="entry name" value="Pectin_lyas_fold"/>
</dbReference>
<dbReference type="InterPro" id="IPR011050">
    <property type="entry name" value="Pectin_lyase_fold/virulence"/>
</dbReference>
<dbReference type="PANTHER" id="PTHR31339">
    <property type="entry name" value="PECTIN LYASE-RELATED"/>
    <property type="match status" value="1"/>
</dbReference>
<dbReference type="PANTHER" id="PTHR31339:SF9">
    <property type="entry name" value="PLASMIN AND FIBRONECTIN-BINDING PROTEIN A"/>
    <property type="match status" value="1"/>
</dbReference>
<dbReference type="Pfam" id="PF00295">
    <property type="entry name" value="Glyco_hydro_28"/>
    <property type="match status" value="1"/>
</dbReference>
<dbReference type="SUPFAM" id="SSF51126">
    <property type="entry name" value="Pectin lyase-like"/>
    <property type="match status" value="1"/>
</dbReference>
<dbReference type="PROSITE" id="PS00502">
    <property type="entry name" value="POLYGALACTURONASE"/>
    <property type="match status" value="1"/>
</dbReference>
<keyword id="KW-0961">Cell wall biogenesis/degradation</keyword>
<keyword id="KW-0326">Glycosidase</keyword>
<keyword id="KW-0378">Hydrolase</keyword>
<keyword id="KW-0614">Plasmid</keyword>
<keyword id="KW-1185">Reference proteome</keyword>
<keyword id="KW-0964">Secreted</keyword>
<keyword id="KW-0732">Signal</keyword>
<evidence type="ECO:0000250" key="1"/>
<evidence type="ECO:0000255" key="2"/>
<evidence type="ECO:0000255" key="3">
    <source>
        <dbReference type="PROSITE-ProRule" id="PRU10052"/>
    </source>
</evidence>
<evidence type="ECO:0000305" key="4"/>
<feature type="signal peptide" evidence="2">
    <location>
        <begin position="1"/>
        <end position="23"/>
    </location>
</feature>
<feature type="chain" id="PRO_0000024760" description="Polygalacturonase">
    <location>
        <begin position="24"/>
        <end position="531"/>
    </location>
</feature>
<feature type="region of interest" description="Required for PGA export across the outer membrane and catalytic activity" evidence="1">
    <location>
        <begin position="518"/>
        <end position="531"/>
    </location>
</feature>
<feature type="active site" description="Proton donor" evidence="3">
    <location>
        <position position="307"/>
    </location>
</feature>
<feature type="active site" evidence="3">
    <location>
        <position position="333"/>
    </location>
</feature>
<accession>P58598</accession>
<sequence>MILSHRYTLIALAAAILSSGAHAAGASVTASWGNVAEPSLPADSAVCKTLAATITPVSGSIDTVDGNPSNSQPDASRIQTAIDNCPAGQAVRLVKGSAGESGFLSGSLKLKSGVTLWIDTGVTLFASRNPADFDNGVGTCGTATTSNTKSCNALIVARDTVGSGIVGDGIIDGRGGSLVTSGPNANRLTWWDIAYLNKTKGLNQQNPRLVQLYNGSAFTLYRVTVQNSPNFHIVTTGTAGVTAWGIKIVTPSLAYTVPGYKCAAGTTPDKVTPATCFTPETVKNTDGFDPGQSTNVVLANSYISTGDDHVAIKASGGATRNLLFAHNHFYYGHGLSIGSETDGGVSNMQVTDLAMDGNDSSGGNGLRIKSDISRGGKVNNIVYNGICMRNVKEPLVFDPFYSTAKGSLYPNFTNIVVKNFHDLGSAKGIARTMTFLGYEAKKRTNPLTLTLDNVVFDGTQPAFDVAHNGGPASPNGTHFTFGGNGPVSFANAIVTSSTTDVTVTGTPGTAAAVDCSNAFVPLKSVAPTSPI</sequence>
<proteinExistence type="inferred from homology"/>
<comment type="function">
    <text>Contributes to the wilt disease production on tomato.</text>
</comment>
<comment type="catalytic activity">
    <reaction>
        <text>(1,4-alpha-D-galacturonosyl)n+m + H2O = (1,4-alpha-D-galacturonosyl)n + (1,4-alpha-D-galacturonosyl)m.</text>
        <dbReference type="EC" id="3.2.1.15"/>
    </reaction>
</comment>
<comment type="subunit">
    <text evidence="1">Monomer.</text>
</comment>
<comment type="subcellular location">
    <subcellularLocation>
        <location evidence="1">Secreted</location>
    </subcellularLocation>
</comment>
<comment type="similarity">
    <text evidence="4">Belongs to the glycosyl hydrolase 28 family.</text>
</comment>